<sequence>MQVSVETTQGLGRRVTITIAADSIETAVKSELVNVAKKVRIDGFRKGKVPMNIVAQRYGASVRQDVLGDLMSRNFIDAIIKEKINPAGAPTYVPGEYKLGEDFTYSVEFEVYPEVELQGLEAIEVEKPIVEVTDADVDGMLDTLRKQQATWKEKDGAVEAEDRVTIDFTGSVDGEEFEGGKASDFVLAMGQGRMIPGFEDGIKGHKAGEEFTIDVTFPEEYHAENLKGKAAKFAINLKKVEERELPELTAEFIKRFGVEDGSVEGLRAEVRKNMERELKSAIRNRVKSQAIEGLVKANDIDVPAALIDSEIDVLRRQAAQRFGGNEKQALELPRELFEEQAKRRVVVGLLLGEVIRTNELKADEERVKGLIEEMASAYEDPKEVIEFYSKNKELMDNMRNVALEEQAVEAVLAKAKVTEKETTFNELMNQQA</sequence>
<keyword id="KW-0131">Cell cycle</keyword>
<keyword id="KW-0132">Cell division</keyword>
<keyword id="KW-0143">Chaperone</keyword>
<keyword id="KW-0963">Cytoplasm</keyword>
<keyword id="KW-0413">Isomerase</keyword>
<keyword id="KW-0697">Rotamase</keyword>
<comment type="function">
    <text evidence="1">Involved in protein export. Acts as a chaperone by maintaining the newly synthesized protein in an open conformation. Functions as a peptidyl-prolyl cis-trans isomerase.</text>
</comment>
<comment type="catalytic activity">
    <reaction evidence="1">
        <text>[protein]-peptidylproline (omega=180) = [protein]-peptidylproline (omega=0)</text>
        <dbReference type="Rhea" id="RHEA:16237"/>
        <dbReference type="Rhea" id="RHEA-COMP:10747"/>
        <dbReference type="Rhea" id="RHEA-COMP:10748"/>
        <dbReference type="ChEBI" id="CHEBI:83833"/>
        <dbReference type="ChEBI" id="CHEBI:83834"/>
        <dbReference type="EC" id="5.2.1.8"/>
    </reaction>
</comment>
<comment type="subunit">
    <text evidence="1">Homodimer and monomer. In vivo most of the ribosomes are in complex with monomeric TF. Uncomplexed TF, however, is in a monomer-dimer equilibrium with approximately two thirds of TF existing in a dimeric state.</text>
</comment>
<comment type="subcellular location">
    <subcellularLocation>
        <location>Cytoplasm</location>
    </subcellularLocation>
    <text evidence="1">About half TF is bound to the ribosome near the polypeptide exit tunnel while the other half is free in the cytoplasm.</text>
</comment>
<comment type="domain">
    <text evidence="1">Consists of 3 domains; the N-terminus binds the ribosome, the middle domain has PPIase activity, while the C-terminus has intrinsic chaperone activity on its own.</text>
</comment>
<comment type="similarity">
    <text evidence="1">Belongs to the FKBP-type PPIase family. Tig subfamily.</text>
</comment>
<accession>B7M3S9</accession>
<protein>
    <recommendedName>
        <fullName evidence="1">Trigger factor</fullName>
        <shortName evidence="1">TF</shortName>
        <ecNumber evidence="1">5.2.1.8</ecNumber>
    </recommendedName>
    <alternativeName>
        <fullName evidence="1">PPIase</fullName>
    </alternativeName>
</protein>
<evidence type="ECO:0000255" key="1">
    <source>
        <dbReference type="HAMAP-Rule" id="MF_00303"/>
    </source>
</evidence>
<gene>
    <name evidence="1" type="primary">tig</name>
    <name type="ordered locus">ECIAI1_0440</name>
</gene>
<dbReference type="EC" id="5.2.1.8" evidence="1"/>
<dbReference type="EMBL" id="CU928160">
    <property type="protein sequence ID" value="CAQ97312.1"/>
    <property type="molecule type" value="Genomic_DNA"/>
</dbReference>
<dbReference type="RefSeq" id="WP_001198386.1">
    <property type="nucleotide sequence ID" value="NC_011741.1"/>
</dbReference>
<dbReference type="SMR" id="B7M3S9"/>
<dbReference type="GeneID" id="75202861"/>
<dbReference type="KEGG" id="ecr:ECIAI1_0440"/>
<dbReference type="HOGENOM" id="CLU_033058_2_0_6"/>
<dbReference type="GO" id="GO:0005737">
    <property type="term" value="C:cytoplasm"/>
    <property type="evidence" value="ECO:0007669"/>
    <property type="project" value="UniProtKB-SubCell"/>
</dbReference>
<dbReference type="GO" id="GO:0003755">
    <property type="term" value="F:peptidyl-prolyl cis-trans isomerase activity"/>
    <property type="evidence" value="ECO:0007669"/>
    <property type="project" value="UniProtKB-UniRule"/>
</dbReference>
<dbReference type="GO" id="GO:0044183">
    <property type="term" value="F:protein folding chaperone"/>
    <property type="evidence" value="ECO:0007669"/>
    <property type="project" value="TreeGrafter"/>
</dbReference>
<dbReference type="GO" id="GO:0043022">
    <property type="term" value="F:ribosome binding"/>
    <property type="evidence" value="ECO:0007669"/>
    <property type="project" value="TreeGrafter"/>
</dbReference>
<dbReference type="GO" id="GO:0051083">
    <property type="term" value="P:'de novo' cotranslational protein folding"/>
    <property type="evidence" value="ECO:0007669"/>
    <property type="project" value="TreeGrafter"/>
</dbReference>
<dbReference type="GO" id="GO:0051301">
    <property type="term" value="P:cell division"/>
    <property type="evidence" value="ECO:0007669"/>
    <property type="project" value="UniProtKB-KW"/>
</dbReference>
<dbReference type="GO" id="GO:0061077">
    <property type="term" value="P:chaperone-mediated protein folding"/>
    <property type="evidence" value="ECO:0007669"/>
    <property type="project" value="TreeGrafter"/>
</dbReference>
<dbReference type="GO" id="GO:0015031">
    <property type="term" value="P:protein transport"/>
    <property type="evidence" value="ECO:0007669"/>
    <property type="project" value="UniProtKB-UniRule"/>
</dbReference>
<dbReference type="GO" id="GO:0043335">
    <property type="term" value="P:protein unfolding"/>
    <property type="evidence" value="ECO:0007669"/>
    <property type="project" value="TreeGrafter"/>
</dbReference>
<dbReference type="FunFam" id="1.10.3120.10:FF:000001">
    <property type="entry name" value="Trigger factor"/>
    <property type="match status" value="1"/>
</dbReference>
<dbReference type="FunFam" id="3.10.50.40:FF:000001">
    <property type="entry name" value="Trigger factor"/>
    <property type="match status" value="1"/>
</dbReference>
<dbReference type="FunFam" id="3.30.70.1050:FF:000001">
    <property type="entry name" value="Trigger factor"/>
    <property type="match status" value="1"/>
</dbReference>
<dbReference type="Gene3D" id="3.10.50.40">
    <property type="match status" value="1"/>
</dbReference>
<dbReference type="Gene3D" id="3.30.70.1050">
    <property type="entry name" value="Trigger factor ribosome-binding domain"/>
    <property type="match status" value="1"/>
</dbReference>
<dbReference type="Gene3D" id="1.10.3120.10">
    <property type="entry name" value="Trigger factor, C-terminal domain"/>
    <property type="match status" value="1"/>
</dbReference>
<dbReference type="HAMAP" id="MF_00303">
    <property type="entry name" value="Trigger_factor_Tig"/>
    <property type="match status" value="1"/>
</dbReference>
<dbReference type="InterPro" id="IPR046357">
    <property type="entry name" value="PPIase_dom_sf"/>
</dbReference>
<dbReference type="InterPro" id="IPR001179">
    <property type="entry name" value="PPIase_FKBP_dom"/>
</dbReference>
<dbReference type="InterPro" id="IPR005215">
    <property type="entry name" value="Trig_fac"/>
</dbReference>
<dbReference type="InterPro" id="IPR008880">
    <property type="entry name" value="Trigger_fac_C"/>
</dbReference>
<dbReference type="InterPro" id="IPR037041">
    <property type="entry name" value="Trigger_fac_C_sf"/>
</dbReference>
<dbReference type="InterPro" id="IPR008881">
    <property type="entry name" value="Trigger_fac_ribosome-bd_bac"/>
</dbReference>
<dbReference type="InterPro" id="IPR036611">
    <property type="entry name" value="Trigger_fac_ribosome-bd_sf"/>
</dbReference>
<dbReference type="InterPro" id="IPR027304">
    <property type="entry name" value="Trigger_fact/SurA_dom_sf"/>
</dbReference>
<dbReference type="NCBIfam" id="TIGR00115">
    <property type="entry name" value="tig"/>
    <property type="match status" value="1"/>
</dbReference>
<dbReference type="PANTHER" id="PTHR30560">
    <property type="entry name" value="TRIGGER FACTOR CHAPERONE AND PEPTIDYL-PROLYL CIS/TRANS ISOMERASE"/>
    <property type="match status" value="1"/>
</dbReference>
<dbReference type="PANTHER" id="PTHR30560:SF3">
    <property type="entry name" value="TRIGGER FACTOR-LIKE PROTEIN TIG, CHLOROPLASTIC"/>
    <property type="match status" value="1"/>
</dbReference>
<dbReference type="Pfam" id="PF00254">
    <property type="entry name" value="FKBP_C"/>
    <property type="match status" value="1"/>
</dbReference>
<dbReference type="Pfam" id="PF05698">
    <property type="entry name" value="Trigger_C"/>
    <property type="match status" value="1"/>
</dbReference>
<dbReference type="Pfam" id="PF05697">
    <property type="entry name" value="Trigger_N"/>
    <property type="match status" value="1"/>
</dbReference>
<dbReference type="PIRSF" id="PIRSF003095">
    <property type="entry name" value="Trigger_factor"/>
    <property type="match status" value="1"/>
</dbReference>
<dbReference type="SUPFAM" id="SSF54534">
    <property type="entry name" value="FKBP-like"/>
    <property type="match status" value="1"/>
</dbReference>
<dbReference type="SUPFAM" id="SSF109998">
    <property type="entry name" value="Triger factor/SurA peptide-binding domain-like"/>
    <property type="match status" value="1"/>
</dbReference>
<dbReference type="SUPFAM" id="SSF102735">
    <property type="entry name" value="Trigger factor ribosome-binding domain"/>
    <property type="match status" value="1"/>
</dbReference>
<dbReference type="PROSITE" id="PS50059">
    <property type="entry name" value="FKBP_PPIASE"/>
    <property type="match status" value="1"/>
</dbReference>
<organism>
    <name type="scientific">Escherichia coli O8 (strain IAI1)</name>
    <dbReference type="NCBI Taxonomy" id="585034"/>
    <lineage>
        <taxon>Bacteria</taxon>
        <taxon>Pseudomonadati</taxon>
        <taxon>Pseudomonadota</taxon>
        <taxon>Gammaproteobacteria</taxon>
        <taxon>Enterobacterales</taxon>
        <taxon>Enterobacteriaceae</taxon>
        <taxon>Escherichia</taxon>
    </lineage>
</organism>
<reference key="1">
    <citation type="journal article" date="2009" name="PLoS Genet.">
        <title>Organised genome dynamics in the Escherichia coli species results in highly diverse adaptive paths.</title>
        <authorList>
            <person name="Touchon M."/>
            <person name="Hoede C."/>
            <person name="Tenaillon O."/>
            <person name="Barbe V."/>
            <person name="Baeriswyl S."/>
            <person name="Bidet P."/>
            <person name="Bingen E."/>
            <person name="Bonacorsi S."/>
            <person name="Bouchier C."/>
            <person name="Bouvet O."/>
            <person name="Calteau A."/>
            <person name="Chiapello H."/>
            <person name="Clermont O."/>
            <person name="Cruveiller S."/>
            <person name="Danchin A."/>
            <person name="Diard M."/>
            <person name="Dossat C."/>
            <person name="Karoui M.E."/>
            <person name="Frapy E."/>
            <person name="Garry L."/>
            <person name="Ghigo J.M."/>
            <person name="Gilles A.M."/>
            <person name="Johnson J."/>
            <person name="Le Bouguenec C."/>
            <person name="Lescat M."/>
            <person name="Mangenot S."/>
            <person name="Martinez-Jehanne V."/>
            <person name="Matic I."/>
            <person name="Nassif X."/>
            <person name="Oztas S."/>
            <person name="Petit M.A."/>
            <person name="Pichon C."/>
            <person name="Rouy Z."/>
            <person name="Ruf C.S."/>
            <person name="Schneider D."/>
            <person name="Tourret J."/>
            <person name="Vacherie B."/>
            <person name="Vallenet D."/>
            <person name="Medigue C."/>
            <person name="Rocha E.P.C."/>
            <person name="Denamur E."/>
        </authorList>
    </citation>
    <scope>NUCLEOTIDE SEQUENCE [LARGE SCALE GENOMIC DNA]</scope>
    <source>
        <strain>IAI1</strain>
    </source>
</reference>
<feature type="chain" id="PRO_1000119517" description="Trigger factor">
    <location>
        <begin position="1"/>
        <end position="432"/>
    </location>
</feature>
<feature type="domain" description="PPIase FKBP-type" evidence="1">
    <location>
        <begin position="161"/>
        <end position="246"/>
    </location>
</feature>
<proteinExistence type="inferred from homology"/>
<name>TIG_ECO8A</name>